<gene>
    <name evidence="1" type="primary">proB</name>
    <name type="ordered locus">MT2515</name>
</gene>
<reference key="1">
    <citation type="journal article" date="2002" name="J. Bacteriol.">
        <title>Whole-genome comparison of Mycobacterium tuberculosis clinical and laboratory strains.</title>
        <authorList>
            <person name="Fleischmann R.D."/>
            <person name="Alland D."/>
            <person name="Eisen J.A."/>
            <person name="Carpenter L."/>
            <person name="White O."/>
            <person name="Peterson J.D."/>
            <person name="DeBoy R.T."/>
            <person name="Dodson R.J."/>
            <person name="Gwinn M.L."/>
            <person name="Haft D.H."/>
            <person name="Hickey E.K."/>
            <person name="Kolonay J.F."/>
            <person name="Nelson W.C."/>
            <person name="Umayam L.A."/>
            <person name="Ermolaeva M.D."/>
            <person name="Salzberg S.L."/>
            <person name="Delcher A."/>
            <person name="Utterback T.R."/>
            <person name="Weidman J.F."/>
            <person name="Khouri H.M."/>
            <person name="Gill J."/>
            <person name="Mikula A."/>
            <person name="Bishai W."/>
            <person name="Jacobs W.R. Jr."/>
            <person name="Venter J.C."/>
            <person name="Fraser C.M."/>
        </authorList>
    </citation>
    <scope>NUCLEOTIDE SEQUENCE [LARGE SCALE GENOMIC DNA]</scope>
    <source>
        <strain>CDC 1551 / Oshkosh</strain>
    </source>
</reference>
<feature type="chain" id="PRO_0000428119" description="Glutamate 5-kinase">
    <location>
        <begin position="1"/>
        <end position="376"/>
    </location>
</feature>
<feature type="domain" description="PUA" evidence="1">
    <location>
        <begin position="280"/>
        <end position="358"/>
    </location>
</feature>
<feature type="binding site" evidence="1">
    <location>
        <position position="18"/>
    </location>
    <ligand>
        <name>ATP</name>
        <dbReference type="ChEBI" id="CHEBI:30616"/>
    </ligand>
</feature>
<feature type="binding site" evidence="1">
    <location>
        <position position="58"/>
    </location>
    <ligand>
        <name>substrate</name>
    </ligand>
</feature>
<feature type="binding site" evidence="1">
    <location>
        <position position="145"/>
    </location>
    <ligand>
        <name>substrate</name>
    </ligand>
</feature>
<feature type="binding site" evidence="1">
    <location>
        <position position="157"/>
    </location>
    <ligand>
        <name>substrate</name>
    </ligand>
</feature>
<feature type="binding site" evidence="1">
    <location>
        <begin position="177"/>
        <end position="178"/>
    </location>
    <ligand>
        <name>ATP</name>
        <dbReference type="ChEBI" id="CHEBI:30616"/>
    </ligand>
</feature>
<feature type="binding site" evidence="1">
    <location>
        <begin position="218"/>
        <end position="224"/>
    </location>
    <ligand>
        <name>ATP</name>
        <dbReference type="ChEBI" id="CHEBI:30616"/>
    </ligand>
</feature>
<keyword id="KW-0028">Amino-acid biosynthesis</keyword>
<keyword id="KW-0067">ATP-binding</keyword>
<keyword id="KW-0963">Cytoplasm</keyword>
<keyword id="KW-0418">Kinase</keyword>
<keyword id="KW-0547">Nucleotide-binding</keyword>
<keyword id="KW-0641">Proline biosynthesis</keyword>
<keyword id="KW-1185">Reference proteome</keyword>
<keyword id="KW-0808">Transferase</keyword>
<evidence type="ECO:0000255" key="1">
    <source>
        <dbReference type="HAMAP-Rule" id="MF_00456"/>
    </source>
</evidence>
<name>PROB_MYCTO</name>
<proteinExistence type="inferred from homology"/>
<sequence length="376" mass="38804">MRSPHRDAIRTARGLVVKVGTTALTTPSGMFDAGRLAGLAEAVERRMKAGSDVVIVSSGAIAAGIEPLGLSRRPKDLATKQAAASVGQVALVNSWSAAFARYGRTVGQVLLTAHDISMRVQHTNAQRTLDRLRALHAVAIVNENDTVATNEIRFGDNDRLSALVAHLVGADALVLLSDIDGLYDCDPRKTADATFIPEVSGPADLDGVVAGRSSHLGTGGMASKVSAALLAADAGVPVLLAPAADAATALADASVGTVFAARPARLSARRFWVRYAAEATGALTLDAGAVRAVVRQRRSLLAAGITAVSGRFCGGDVVELRAPDAAMVARGVVAYDASELATMVGRSTSELPGELRRPVVHADDLVAVSAKQAKQV</sequence>
<protein>
    <recommendedName>
        <fullName evidence="1">Glutamate 5-kinase</fullName>
        <ecNumber evidence="1">2.7.2.11</ecNumber>
    </recommendedName>
    <alternativeName>
        <fullName evidence="1">Gamma-glutamyl kinase</fullName>
        <shortName evidence="1">GK</shortName>
    </alternativeName>
</protein>
<organism>
    <name type="scientific">Mycobacterium tuberculosis (strain CDC 1551 / Oshkosh)</name>
    <dbReference type="NCBI Taxonomy" id="83331"/>
    <lineage>
        <taxon>Bacteria</taxon>
        <taxon>Bacillati</taxon>
        <taxon>Actinomycetota</taxon>
        <taxon>Actinomycetes</taxon>
        <taxon>Mycobacteriales</taxon>
        <taxon>Mycobacteriaceae</taxon>
        <taxon>Mycobacterium</taxon>
        <taxon>Mycobacterium tuberculosis complex</taxon>
    </lineage>
</organism>
<dbReference type="EC" id="2.7.2.11" evidence="1"/>
<dbReference type="EMBL" id="AE000516">
    <property type="protein sequence ID" value="AAK46812.1"/>
    <property type="molecule type" value="Genomic_DNA"/>
</dbReference>
<dbReference type="PIR" id="E70680">
    <property type="entry name" value="E70680"/>
</dbReference>
<dbReference type="RefSeq" id="WP_003412568.1">
    <property type="nucleotide sequence ID" value="NZ_KK341227.1"/>
</dbReference>
<dbReference type="SMR" id="P9WHU8"/>
<dbReference type="KEGG" id="mtc:MT2515"/>
<dbReference type="PATRIC" id="fig|83331.31.peg.2714"/>
<dbReference type="HOGENOM" id="CLU_025400_2_0_11"/>
<dbReference type="UniPathway" id="UPA00098">
    <property type="reaction ID" value="UER00359"/>
</dbReference>
<dbReference type="Proteomes" id="UP000001020">
    <property type="component" value="Chromosome"/>
</dbReference>
<dbReference type="GO" id="GO:0005829">
    <property type="term" value="C:cytosol"/>
    <property type="evidence" value="ECO:0007669"/>
    <property type="project" value="TreeGrafter"/>
</dbReference>
<dbReference type="GO" id="GO:0005524">
    <property type="term" value="F:ATP binding"/>
    <property type="evidence" value="ECO:0007669"/>
    <property type="project" value="UniProtKB-KW"/>
</dbReference>
<dbReference type="GO" id="GO:0004349">
    <property type="term" value="F:glutamate 5-kinase activity"/>
    <property type="evidence" value="ECO:0007669"/>
    <property type="project" value="UniProtKB-UniRule"/>
</dbReference>
<dbReference type="GO" id="GO:0003723">
    <property type="term" value="F:RNA binding"/>
    <property type="evidence" value="ECO:0007669"/>
    <property type="project" value="InterPro"/>
</dbReference>
<dbReference type="GO" id="GO:0055129">
    <property type="term" value="P:L-proline biosynthetic process"/>
    <property type="evidence" value="ECO:0007669"/>
    <property type="project" value="UniProtKB-UniRule"/>
</dbReference>
<dbReference type="CDD" id="cd04242">
    <property type="entry name" value="AAK_G5K_ProB"/>
    <property type="match status" value="1"/>
</dbReference>
<dbReference type="CDD" id="cd21157">
    <property type="entry name" value="PUA_G5K"/>
    <property type="match status" value="1"/>
</dbReference>
<dbReference type="FunFam" id="3.40.1160.10:FF:000018">
    <property type="entry name" value="Glutamate 5-kinase"/>
    <property type="match status" value="1"/>
</dbReference>
<dbReference type="Gene3D" id="3.40.1160.10">
    <property type="entry name" value="Acetylglutamate kinase-like"/>
    <property type="match status" value="1"/>
</dbReference>
<dbReference type="Gene3D" id="2.30.130.10">
    <property type="entry name" value="PUA domain"/>
    <property type="match status" value="1"/>
</dbReference>
<dbReference type="HAMAP" id="MF_00456">
    <property type="entry name" value="ProB"/>
    <property type="match status" value="1"/>
</dbReference>
<dbReference type="InterPro" id="IPR036393">
    <property type="entry name" value="AceGlu_kinase-like_sf"/>
</dbReference>
<dbReference type="InterPro" id="IPR001048">
    <property type="entry name" value="Asp/Glu/Uridylate_kinase"/>
</dbReference>
<dbReference type="InterPro" id="IPR041739">
    <property type="entry name" value="G5K_ProB"/>
</dbReference>
<dbReference type="InterPro" id="IPR001057">
    <property type="entry name" value="Glu/AcGlu_kinase"/>
</dbReference>
<dbReference type="InterPro" id="IPR011529">
    <property type="entry name" value="Glu_5kinase"/>
</dbReference>
<dbReference type="InterPro" id="IPR005715">
    <property type="entry name" value="Glu_5kinase/COase_Synthase"/>
</dbReference>
<dbReference type="InterPro" id="IPR019797">
    <property type="entry name" value="Glutamate_5-kinase_CS"/>
</dbReference>
<dbReference type="InterPro" id="IPR002478">
    <property type="entry name" value="PUA"/>
</dbReference>
<dbReference type="InterPro" id="IPR015947">
    <property type="entry name" value="PUA-like_sf"/>
</dbReference>
<dbReference type="InterPro" id="IPR036974">
    <property type="entry name" value="PUA_sf"/>
</dbReference>
<dbReference type="NCBIfam" id="TIGR01027">
    <property type="entry name" value="proB"/>
    <property type="match status" value="1"/>
</dbReference>
<dbReference type="PANTHER" id="PTHR43654">
    <property type="entry name" value="GLUTAMATE 5-KINASE"/>
    <property type="match status" value="1"/>
</dbReference>
<dbReference type="PANTHER" id="PTHR43654:SF1">
    <property type="entry name" value="ISOPENTENYL PHOSPHATE KINASE"/>
    <property type="match status" value="1"/>
</dbReference>
<dbReference type="Pfam" id="PF00696">
    <property type="entry name" value="AA_kinase"/>
    <property type="match status" value="1"/>
</dbReference>
<dbReference type="Pfam" id="PF01472">
    <property type="entry name" value="PUA"/>
    <property type="match status" value="1"/>
</dbReference>
<dbReference type="PIRSF" id="PIRSF000729">
    <property type="entry name" value="GK"/>
    <property type="match status" value="1"/>
</dbReference>
<dbReference type="PRINTS" id="PR00474">
    <property type="entry name" value="GLU5KINASE"/>
</dbReference>
<dbReference type="SMART" id="SM00359">
    <property type="entry name" value="PUA"/>
    <property type="match status" value="1"/>
</dbReference>
<dbReference type="SUPFAM" id="SSF53633">
    <property type="entry name" value="Carbamate kinase-like"/>
    <property type="match status" value="1"/>
</dbReference>
<dbReference type="SUPFAM" id="SSF88697">
    <property type="entry name" value="PUA domain-like"/>
    <property type="match status" value="1"/>
</dbReference>
<dbReference type="PROSITE" id="PS00902">
    <property type="entry name" value="GLUTAMATE_5_KINASE"/>
    <property type="match status" value="1"/>
</dbReference>
<dbReference type="PROSITE" id="PS50890">
    <property type="entry name" value="PUA"/>
    <property type="match status" value="1"/>
</dbReference>
<accession>P9WHU8</accession>
<accession>L0TCJ0</accession>
<accession>P71910</accession>
<comment type="function">
    <text evidence="1">Catalyzes the transfer of a phosphate group to glutamate to form L-glutamate 5-phosphate.</text>
</comment>
<comment type="catalytic activity">
    <reaction evidence="1">
        <text>L-glutamate + ATP = L-glutamyl 5-phosphate + ADP</text>
        <dbReference type="Rhea" id="RHEA:14877"/>
        <dbReference type="ChEBI" id="CHEBI:29985"/>
        <dbReference type="ChEBI" id="CHEBI:30616"/>
        <dbReference type="ChEBI" id="CHEBI:58274"/>
        <dbReference type="ChEBI" id="CHEBI:456216"/>
        <dbReference type="EC" id="2.7.2.11"/>
    </reaction>
</comment>
<comment type="pathway">
    <text evidence="1">Amino-acid biosynthesis; L-proline biosynthesis; L-glutamate 5-semialdehyde from L-glutamate: step 1/2.</text>
</comment>
<comment type="subcellular location">
    <subcellularLocation>
        <location evidence="1">Cytoplasm</location>
    </subcellularLocation>
</comment>
<comment type="similarity">
    <text evidence="1">Belongs to the glutamate 5-kinase family.</text>
</comment>